<sequence length="423" mass="44556">MAALAAGEPFSGRATGGDGGVRSDVMAPPAMAEEAKVSCLPLAREVGRRAAAAGGGQGRNFIVSPLSFHAALALVADGARGETQRELLGFLGSPSLAELHRSPTTRLVARLRHLPNTSFACGVWVDRGRALTPEFADAAASRYAAVAEPADFATQPEQARERVNAFVSDATEGLIRDVLPPNSVDSSTVVVLANAVHFKGTWSLPFHPSATFHAPFHLLDGGAVRAPFMTTEIPFERHVAAFPGFTALKLPYKNVGGGGGGDGVPRAAFYMLLLLPDGDGALKLADLYDMAVTTPEFIKKHTPAAEAPVRRLMVPKFKFSFKFEAKSDMRKLGVTRAFAGGDFSGMVTGGDGLFIAEVYHQATIEVDELGTVAAASTAVVMMQKGSSLPPVDFVADRPFLFAVVEELTGAVLFLGHVVNPLAE</sequence>
<evidence type="ECO:0000250" key="1"/>
<evidence type="ECO:0000255" key="2"/>
<evidence type="ECO:0000256" key="3">
    <source>
        <dbReference type="SAM" id="MobiDB-lite"/>
    </source>
</evidence>
<evidence type="ECO:0000305" key="4"/>
<comment type="function">
    <text evidence="1">Probable serine protease inhibitor.</text>
</comment>
<comment type="domain">
    <text evidence="1">The reactive center loop (RCL) extends out from the body of the protein and directs binding to the target protease. The protease cleaves the serpin at the reactive site within the RCL, establishing a covalent linkage between the carboxyl group of the serpin reactive site and the serine hydroxyl of the protease. The resulting inactive serpin-protease complex is highly stable (By similarity).</text>
</comment>
<comment type="similarity">
    <text evidence="4">Belongs to the serpin family.</text>
</comment>
<comment type="sequence caution" evidence="4">
    <conflict type="erroneous initiation">
        <sequence resource="EMBL-CDS" id="BAF04598"/>
    </conflict>
    <text>Truncated N-terminus.</text>
</comment>
<keyword id="KW-0646">Protease inhibitor</keyword>
<keyword id="KW-1185">Reference proteome</keyword>
<keyword id="KW-0722">Serine protease inhibitor</keyword>
<protein>
    <recommendedName>
        <fullName>Putative serpin-Z12</fullName>
    </recommendedName>
    <alternativeName>
        <fullName>OrysaZ12</fullName>
    </alternativeName>
</protein>
<feature type="chain" id="PRO_0000334564" description="Putative serpin-Z12">
    <location>
        <begin position="1"/>
        <end position="423"/>
    </location>
</feature>
<feature type="region of interest" description="Disordered" evidence="3">
    <location>
        <begin position="1"/>
        <end position="25"/>
    </location>
</feature>
<feature type="region of interest" description="RCL">
    <location>
        <begin position="370"/>
        <end position="394"/>
    </location>
</feature>
<feature type="site" description="Reactive bond" evidence="2">
    <location>
        <begin position="384"/>
        <end position="385"/>
    </location>
</feature>
<proteinExistence type="inferred from homology"/>
<gene>
    <name type="ordered locus">Os01g0267300</name>
    <name type="ordered locus">LOC_Os01g16200</name>
    <name type="ORF">P0011D01.15</name>
</gene>
<reference key="1">
    <citation type="journal article" date="2002" name="Nature">
        <title>The genome sequence and structure of rice chromosome 1.</title>
        <authorList>
            <person name="Sasaki T."/>
            <person name="Matsumoto T."/>
            <person name="Yamamoto K."/>
            <person name="Sakata K."/>
            <person name="Baba T."/>
            <person name="Katayose Y."/>
            <person name="Wu J."/>
            <person name="Niimura Y."/>
            <person name="Cheng Z."/>
            <person name="Nagamura Y."/>
            <person name="Antonio B.A."/>
            <person name="Kanamori H."/>
            <person name="Hosokawa S."/>
            <person name="Masukawa M."/>
            <person name="Arikawa K."/>
            <person name="Chiden Y."/>
            <person name="Hayashi M."/>
            <person name="Okamoto M."/>
            <person name="Ando T."/>
            <person name="Aoki H."/>
            <person name="Arita K."/>
            <person name="Hamada M."/>
            <person name="Harada C."/>
            <person name="Hijishita S."/>
            <person name="Honda M."/>
            <person name="Ichikawa Y."/>
            <person name="Idonuma A."/>
            <person name="Iijima M."/>
            <person name="Ikeda M."/>
            <person name="Ikeno M."/>
            <person name="Ito S."/>
            <person name="Ito T."/>
            <person name="Ito Y."/>
            <person name="Ito Y."/>
            <person name="Iwabuchi A."/>
            <person name="Kamiya K."/>
            <person name="Karasawa W."/>
            <person name="Katagiri S."/>
            <person name="Kikuta A."/>
            <person name="Kobayashi N."/>
            <person name="Kono I."/>
            <person name="Machita K."/>
            <person name="Maehara T."/>
            <person name="Mizuno H."/>
            <person name="Mizubayashi T."/>
            <person name="Mukai Y."/>
            <person name="Nagasaki H."/>
            <person name="Nakashima M."/>
            <person name="Nakama Y."/>
            <person name="Nakamichi Y."/>
            <person name="Nakamura M."/>
            <person name="Namiki N."/>
            <person name="Negishi M."/>
            <person name="Ohta I."/>
            <person name="Ono N."/>
            <person name="Saji S."/>
            <person name="Sakai K."/>
            <person name="Shibata M."/>
            <person name="Shimokawa T."/>
            <person name="Shomura A."/>
            <person name="Song J."/>
            <person name="Takazaki Y."/>
            <person name="Terasawa K."/>
            <person name="Tsuji K."/>
            <person name="Waki K."/>
            <person name="Yamagata H."/>
            <person name="Yamane H."/>
            <person name="Yoshiki S."/>
            <person name="Yoshihara R."/>
            <person name="Yukawa K."/>
            <person name="Zhong H."/>
            <person name="Iwama H."/>
            <person name="Endo T."/>
            <person name="Ito H."/>
            <person name="Hahn J.H."/>
            <person name="Kim H.-I."/>
            <person name="Eun M.-Y."/>
            <person name="Yano M."/>
            <person name="Jiang J."/>
            <person name="Gojobori T."/>
        </authorList>
    </citation>
    <scope>NUCLEOTIDE SEQUENCE [LARGE SCALE GENOMIC DNA]</scope>
    <source>
        <strain>cv. Nipponbare</strain>
    </source>
</reference>
<reference key="2">
    <citation type="journal article" date="2005" name="Nature">
        <title>The map-based sequence of the rice genome.</title>
        <authorList>
            <consortium name="International rice genome sequencing project (IRGSP)"/>
        </authorList>
    </citation>
    <scope>NUCLEOTIDE SEQUENCE [LARGE SCALE GENOMIC DNA]</scope>
    <source>
        <strain>cv. Nipponbare</strain>
    </source>
</reference>
<reference key="3">
    <citation type="journal article" date="2008" name="Nucleic Acids Res.">
        <title>The rice annotation project database (RAP-DB): 2008 update.</title>
        <authorList>
            <consortium name="The rice annotation project (RAP)"/>
        </authorList>
    </citation>
    <scope>GENOME REANNOTATION</scope>
    <source>
        <strain>cv. Nipponbare</strain>
    </source>
</reference>
<reference key="4">
    <citation type="journal article" date="2013" name="Rice">
        <title>Improvement of the Oryza sativa Nipponbare reference genome using next generation sequence and optical map data.</title>
        <authorList>
            <person name="Kawahara Y."/>
            <person name="de la Bastide M."/>
            <person name="Hamilton J.P."/>
            <person name="Kanamori H."/>
            <person name="McCombie W.R."/>
            <person name="Ouyang S."/>
            <person name="Schwartz D.C."/>
            <person name="Tanaka T."/>
            <person name="Wu J."/>
            <person name="Zhou S."/>
            <person name="Childs K.L."/>
            <person name="Davidson R.M."/>
            <person name="Lin H."/>
            <person name="Quesada-Ocampo L."/>
            <person name="Vaillancourt B."/>
            <person name="Sakai H."/>
            <person name="Lee S.S."/>
            <person name="Kim J."/>
            <person name="Numa H."/>
            <person name="Itoh T."/>
            <person name="Buell C.R."/>
            <person name="Matsumoto T."/>
        </authorList>
    </citation>
    <scope>GENOME REANNOTATION</scope>
    <source>
        <strain>cv. Nipponbare</strain>
    </source>
</reference>
<reference key="5">
    <citation type="journal article" date="2008" name="Funct. Integr. Genomics">
        <title>Serpins in plants and green algae.</title>
        <authorList>
            <person name="Roberts T.H."/>
            <person name="Hejgaard J."/>
        </authorList>
    </citation>
    <scope>GENE FAMILY</scope>
    <scope>NOMENCLATURE</scope>
</reference>
<name>SPZ12_ORYSJ</name>
<organism>
    <name type="scientific">Oryza sativa subsp. japonica</name>
    <name type="common">Rice</name>
    <dbReference type="NCBI Taxonomy" id="39947"/>
    <lineage>
        <taxon>Eukaryota</taxon>
        <taxon>Viridiplantae</taxon>
        <taxon>Streptophyta</taxon>
        <taxon>Embryophyta</taxon>
        <taxon>Tracheophyta</taxon>
        <taxon>Spermatophyta</taxon>
        <taxon>Magnoliopsida</taxon>
        <taxon>Liliopsida</taxon>
        <taxon>Poales</taxon>
        <taxon>Poaceae</taxon>
        <taxon>BOP clade</taxon>
        <taxon>Oryzoideae</taxon>
        <taxon>Oryzeae</taxon>
        <taxon>Oryzinae</taxon>
        <taxon>Oryza</taxon>
        <taxon>Oryza sativa</taxon>
    </lineage>
</organism>
<accession>Q5NBM0</accession>
<accession>Q0JNT0</accession>
<dbReference type="EMBL" id="AP000969">
    <property type="protein sequence ID" value="BAD81136.1"/>
    <property type="molecule type" value="Genomic_DNA"/>
</dbReference>
<dbReference type="EMBL" id="AP008207">
    <property type="protein sequence ID" value="BAF04598.2"/>
    <property type="status" value="ALT_INIT"/>
    <property type="molecule type" value="Genomic_DNA"/>
</dbReference>
<dbReference type="EMBL" id="AP014957">
    <property type="status" value="NOT_ANNOTATED_CDS"/>
    <property type="molecule type" value="Genomic_DNA"/>
</dbReference>
<dbReference type="RefSeq" id="XP_015625509.1">
    <property type="nucleotide sequence ID" value="XM_015770023.1"/>
</dbReference>
<dbReference type="SMR" id="Q5NBM0"/>
<dbReference type="FunCoup" id="Q5NBM0">
    <property type="interactions" value="283"/>
</dbReference>
<dbReference type="STRING" id="39947.Q5NBM0"/>
<dbReference type="PaxDb" id="39947-Q5NBM0"/>
<dbReference type="KEGG" id="dosa:Os01g0267300"/>
<dbReference type="KEGG" id="osa:4324380"/>
<dbReference type="eggNOG" id="KOG2392">
    <property type="taxonomic scope" value="Eukaryota"/>
</dbReference>
<dbReference type="HOGENOM" id="CLU_023330_4_0_1"/>
<dbReference type="InParanoid" id="Q5NBM0"/>
<dbReference type="OrthoDB" id="686494at2759"/>
<dbReference type="Proteomes" id="UP000000763">
    <property type="component" value="Chromosome 1"/>
</dbReference>
<dbReference type="Proteomes" id="UP000059680">
    <property type="component" value="Chromosome 1"/>
</dbReference>
<dbReference type="GO" id="GO:0005615">
    <property type="term" value="C:extracellular space"/>
    <property type="evidence" value="ECO:0000318"/>
    <property type="project" value="GO_Central"/>
</dbReference>
<dbReference type="GO" id="GO:0004867">
    <property type="term" value="F:serine-type endopeptidase inhibitor activity"/>
    <property type="evidence" value="ECO:0007669"/>
    <property type="project" value="UniProtKB-KW"/>
</dbReference>
<dbReference type="CDD" id="cd02043">
    <property type="entry name" value="serpinP_plants"/>
    <property type="match status" value="1"/>
</dbReference>
<dbReference type="FunFam" id="2.30.39.10:FF:000038">
    <property type="entry name" value="Os01g0267300 protein"/>
    <property type="match status" value="1"/>
</dbReference>
<dbReference type="FunFam" id="2.10.310.10:FF:000001">
    <property type="entry name" value="Serpin family A member 1"/>
    <property type="match status" value="1"/>
</dbReference>
<dbReference type="Gene3D" id="2.30.39.10">
    <property type="entry name" value="Alpha-1-antitrypsin, domain 1"/>
    <property type="match status" value="1"/>
</dbReference>
<dbReference type="Gene3D" id="3.30.497.10">
    <property type="entry name" value="Antithrombin, subunit I, domain 2"/>
    <property type="match status" value="1"/>
</dbReference>
<dbReference type="InterPro" id="IPR023795">
    <property type="entry name" value="Serpin_CS"/>
</dbReference>
<dbReference type="InterPro" id="IPR023796">
    <property type="entry name" value="Serpin_dom"/>
</dbReference>
<dbReference type="InterPro" id="IPR000215">
    <property type="entry name" value="Serpin_fam"/>
</dbReference>
<dbReference type="InterPro" id="IPR036186">
    <property type="entry name" value="Serpin_sf"/>
</dbReference>
<dbReference type="InterPro" id="IPR042178">
    <property type="entry name" value="Serpin_sf_1"/>
</dbReference>
<dbReference type="InterPro" id="IPR042185">
    <property type="entry name" value="Serpin_sf_2"/>
</dbReference>
<dbReference type="PANTHER" id="PTHR11461">
    <property type="entry name" value="SERINE PROTEASE INHIBITOR, SERPIN"/>
    <property type="match status" value="1"/>
</dbReference>
<dbReference type="PANTHER" id="PTHR11461:SF203">
    <property type="entry name" value="SERPIN-Z12-RELATED"/>
    <property type="match status" value="1"/>
</dbReference>
<dbReference type="Pfam" id="PF00079">
    <property type="entry name" value="Serpin"/>
    <property type="match status" value="1"/>
</dbReference>
<dbReference type="SMART" id="SM00093">
    <property type="entry name" value="SERPIN"/>
    <property type="match status" value="1"/>
</dbReference>
<dbReference type="SUPFAM" id="SSF56574">
    <property type="entry name" value="Serpins"/>
    <property type="match status" value="1"/>
</dbReference>
<dbReference type="PROSITE" id="PS00284">
    <property type="entry name" value="SERPIN"/>
    <property type="match status" value="1"/>
</dbReference>